<accession>P0DI89</accession>
<sequence>ADDRNPLEECFRETDYEEFLEIAKNGLSTT</sequence>
<proteinExistence type="evidence at protein level"/>
<comment type="function">
    <text evidence="1 3">Catalyzes an oxidative deamination of predominantly hydrophobic and aromatic L-amino acids, thus producing hydrogen peroxide that may contribute to the diverse toxic effects of this enzyme (PubMed:21539897). Is highly active against L-Met, L-Leu, L-norleucine (L-2-aminohexanoate), L-Trp, L-Phe, moderately active against L-Tyr, and no active on L-Gly, L-Ala, L-Val, L-Pro, L-His, L-Lys, L-Arg, L-Asp, L-Asn, L-Gln, L-Glu, L-Ser, and L-Thr (PubMed:21539897). Exhibits diverse biological activities, such as hemorrhage, hemolysis, edema, antibacterial and antiparasitic activities (By similarity). In addition, this protein induces apoptosis. It also interacts with endothelial cells, and inhibits collagen- and ADP-induced platelet aggregation. L-LAAO family effects on platelets are controversial, since it either induces aggregation or inhibits agonist-induced aggregation. These different effects are probably due to different experimental conditions.</text>
</comment>
<comment type="catalytic activity">
    <reaction evidence="3">
        <text>an L-alpha-amino acid + O2 + H2O = a 2-oxocarboxylate + H2O2 + NH4(+)</text>
        <dbReference type="Rhea" id="RHEA:13781"/>
        <dbReference type="ChEBI" id="CHEBI:15377"/>
        <dbReference type="ChEBI" id="CHEBI:15379"/>
        <dbReference type="ChEBI" id="CHEBI:16240"/>
        <dbReference type="ChEBI" id="CHEBI:28938"/>
        <dbReference type="ChEBI" id="CHEBI:35179"/>
        <dbReference type="ChEBI" id="CHEBI:59869"/>
        <dbReference type="EC" id="1.4.3.2"/>
    </reaction>
</comment>
<comment type="catalytic activity">
    <reaction evidence="3">
        <text>L-leucine + O2 + H2O = 4-methyl-2-oxopentanoate + H2O2 + NH4(+)</text>
        <dbReference type="Rhea" id="RHEA:60996"/>
        <dbReference type="ChEBI" id="CHEBI:15377"/>
        <dbReference type="ChEBI" id="CHEBI:15379"/>
        <dbReference type="ChEBI" id="CHEBI:16240"/>
        <dbReference type="ChEBI" id="CHEBI:17865"/>
        <dbReference type="ChEBI" id="CHEBI:28938"/>
        <dbReference type="ChEBI" id="CHEBI:57427"/>
    </reaction>
</comment>
<comment type="catalytic activity">
    <reaction evidence="3">
        <text>L-phenylalanine + O2 + H2O = 3-phenylpyruvate + H2O2 + NH4(+)</text>
        <dbReference type="Rhea" id="RHEA:61240"/>
        <dbReference type="ChEBI" id="CHEBI:15377"/>
        <dbReference type="ChEBI" id="CHEBI:15379"/>
        <dbReference type="ChEBI" id="CHEBI:16240"/>
        <dbReference type="ChEBI" id="CHEBI:18005"/>
        <dbReference type="ChEBI" id="CHEBI:28938"/>
        <dbReference type="ChEBI" id="CHEBI:58095"/>
    </reaction>
</comment>
<comment type="catalytic activity">
    <reaction evidence="3">
        <text>L-tryptophan + O2 + H2O = indole-3-pyruvate + H2O2 + NH4(+)</text>
        <dbReference type="Rhea" id="RHEA:61244"/>
        <dbReference type="ChEBI" id="CHEBI:15377"/>
        <dbReference type="ChEBI" id="CHEBI:15379"/>
        <dbReference type="ChEBI" id="CHEBI:16240"/>
        <dbReference type="ChEBI" id="CHEBI:17640"/>
        <dbReference type="ChEBI" id="CHEBI:28938"/>
        <dbReference type="ChEBI" id="CHEBI:57912"/>
    </reaction>
</comment>
<comment type="catalytic activity">
    <reaction evidence="3">
        <text>L-methionine + O2 + H2O = 4-methylsulfanyl-2-oxobutanoate + H2O2 + NH4(+)</text>
        <dbReference type="Rhea" id="RHEA:61236"/>
        <dbReference type="ChEBI" id="CHEBI:15377"/>
        <dbReference type="ChEBI" id="CHEBI:15379"/>
        <dbReference type="ChEBI" id="CHEBI:16240"/>
        <dbReference type="ChEBI" id="CHEBI:16723"/>
        <dbReference type="ChEBI" id="CHEBI:28938"/>
        <dbReference type="ChEBI" id="CHEBI:57844"/>
    </reaction>
</comment>
<comment type="catalytic activity">
    <reaction evidence="3">
        <text>L-2-aminohexanoate + O2 + H2O = 2-oxohexanoate + H2O2 + NH4(+)</text>
        <dbReference type="Rhea" id="RHEA:61268"/>
        <dbReference type="ChEBI" id="CHEBI:15377"/>
        <dbReference type="ChEBI" id="CHEBI:15379"/>
        <dbReference type="ChEBI" id="CHEBI:16240"/>
        <dbReference type="ChEBI" id="CHEBI:28938"/>
        <dbReference type="ChEBI" id="CHEBI:35177"/>
        <dbReference type="ChEBI" id="CHEBI:58455"/>
    </reaction>
</comment>
<comment type="catalytic activity">
    <reaction evidence="3">
        <text>L-tyrosine + O2 + H2O = 3-(4-hydroxyphenyl)pyruvate + H2O2 + NH4(+)</text>
        <dbReference type="Rhea" id="RHEA:61248"/>
        <dbReference type="ChEBI" id="CHEBI:15377"/>
        <dbReference type="ChEBI" id="CHEBI:15379"/>
        <dbReference type="ChEBI" id="CHEBI:16240"/>
        <dbReference type="ChEBI" id="CHEBI:28938"/>
        <dbReference type="ChEBI" id="CHEBI:36242"/>
        <dbReference type="ChEBI" id="CHEBI:58315"/>
    </reaction>
</comment>
<comment type="cofactor">
    <cofactor evidence="2">
        <name>FAD</name>
        <dbReference type="ChEBI" id="CHEBI:57692"/>
    </cofactor>
</comment>
<comment type="biophysicochemical properties">
    <phDependence>
        <text evidence="3">Optimum pH is 7.5-8.8 for L-Leu.</text>
    </phDependence>
</comment>
<comment type="subunit">
    <text evidence="3">Monomer. This is in contrast with most of its orthologs, that are non-covalently linked homodimers.</text>
</comment>
<comment type="subcellular location">
    <subcellularLocation>
        <location evidence="3">Secreted</location>
    </subcellularLocation>
</comment>
<comment type="tissue specificity">
    <text evidence="6">Expressed by the venom gland.</text>
</comment>
<comment type="PTM">
    <text evidence="3">N-glycosylated.</text>
</comment>
<comment type="mass spectrometry"/>
<comment type="miscellaneous">
    <text evidence="6">Has parasiticidal activities against both trypanosomes and leishmania, as a result of enzyme-catalyzed hydrogen peroxide production.</text>
</comment>
<comment type="similarity">
    <text evidence="5">Belongs to the flavin monoamine oxidase family. FIG1 subfamily.</text>
</comment>
<comment type="caution">
    <text evidence="6">The existence of several isoforms has been reported that may be due to either different composition or different glycosylation or by the synthesis from different genes.</text>
</comment>
<keyword id="KW-0044">Antibiotic</keyword>
<keyword id="KW-0929">Antimicrobial</keyword>
<keyword id="KW-0053">Apoptosis</keyword>
<keyword id="KW-0204">Cytolysis</keyword>
<keyword id="KW-0903">Direct protein sequencing</keyword>
<keyword id="KW-1015">Disulfide bond</keyword>
<keyword id="KW-0274">FAD</keyword>
<keyword id="KW-0285">Flavoprotein</keyword>
<keyword id="KW-0325">Glycoprotein</keyword>
<keyword id="KW-0354">Hemolysis</keyword>
<keyword id="KW-1199">Hemostasis impairing toxin</keyword>
<keyword id="KW-0560">Oxidoreductase</keyword>
<keyword id="KW-1201">Platelet aggregation inhibiting toxin</keyword>
<keyword id="KW-0964">Secreted</keyword>
<keyword id="KW-0800">Toxin</keyword>
<reference key="1">
    <citation type="journal article" date="2011" name="Biochim. Biophys. Acta">
        <title>Cytotoxicity and inhibition of platelet aggregation caused by an l-amino acid oxidase from Bothrops leucurus venom.</title>
        <authorList>
            <person name="Naumann G.B."/>
            <person name="Silva L.F."/>
            <person name="Silva L."/>
            <person name="Faria G."/>
            <person name="Richardson M."/>
            <person name="Evangelista K."/>
            <person name="Kohlhoff M."/>
            <person name="Gontijo C.M."/>
            <person name="Navdaev A."/>
            <person name="de Rezende F.F."/>
            <person name="Eble J.A."/>
            <person name="Sanchez E.F."/>
        </authorList>
    </citation>
    <scope>PROTEIN SEQUENCE</scope>
    <scope>FUNCTION</scope>
    <scope>BIOPHYSICOCHEMICAL PROPERTIES</scope>
    <scope>SUBUNIT</scope>
    <scope>GLYCOSYLATION</scope>
    <scope>MASS SPECTROMETRY</scope>
    <scope>SUBCELLULAR LOCATION</scope>
    <scope>CATALYTIC ACTIVITY</scope>
    <scope>SUBSTRATE SPECIFICITY</scope>
    <source>
        <tissue>Venom</tissue>
    </source>
</reference>
<organism>
    <name type="scientific">Bothrops leucurus</name>
    <name type="common">Whitetail lancehead</name>
    <dbReference type="NCBI Taxonomy" id="157295"/>
    <lineage>
        <taxon>Eukaryota</taxon>
        <taxon>Metazoa</taxon>
        <taxon>Chordata</taxon>
        <taxon>Craniata</taxon>
        <taxon>Vertebrata</taxon>
        <taxon>Euteleostomi</taxon>
        <taxon>Lepidosauria</taxon>
        <taxon>Squamata</taxon>
        <taxon>Bifurcata</taxon>
        <taxon>Unidentata</taxon>
        <taxon>Episquamata</taxon>
        <taxon>Toxicofera</taxon>
        <taxon>Serpentes</taxon>
        <taxon>Colubroidea</taxon>
        <taxon>Viperidae</taxon>
        <taxon>Crotalinae</taxon>
        <taxon>Bothrops</taxon>
    </lineage>
</organism>
<protein>
    <recommendedName>
        <fullName evidence="4">L-amino-acid oxidase</fullName>
        <shortName evidence="4">Bl-LAAO</shortName>
        <shortName>LAO</shortName>
        <ecNumber evidence="4">1.4.3.2</ecNumber>
    </recommendedName>
</protein>
<dbReference type="EC" id="1.4.3.2" evidence="4"/>
<dbReference type="SMR" id="P0DI89"/>
<dbReference type="GO" id="GO:0005576">
    <property type="term" value="C:extracellular region"/>
    <property type="evidence" value="ECO:0007669"/>
    <property type="project" value="UniProtKB-SubCell"/>
</dbReference>
<dbReference type="GO" id="GO:0106329">
    <property type="term" value="F:L-phenylalaine oxidase activity"/>
    <property type="evidence" value="ECO:0007669"/>
    <property type="project" value="RHEA"/>
</dbReference>
<dbReference type="GO" id="GO:0090729">
    <property type="term" value="F:toxin activity"/>
    <property type="evidence" value="ECO:0007669"/>
    <property type="project" value="UniProtKB-KW"/>
</dbReference>
<dbReference type="GO" id="GO:0006915">
    <property type="term" value="P:apoptotic process"/>
    <property type="evidence" value="ECO:0007669"/>
    <property type="project" value="UniProtKB-KW"/>
</dbReference>
<dbReference type="GO" id="GO:0042742">
    <property type="term" value="P:defense response to bacterium"/>
    <property type="evidence" value="ECO:0007669"/>
    <property type="project" value="UniProtKB-KW"/>
</dbReference>
<dbReference type="GO" id="GO:0031640">
    <property type="term" value="P:killing of cells of another organism"/>
    <property type="evidence" value="ECO:0007669"/>
    <property type="project" value="UniProtKB-KW"/>
</dbReference>
<dbReference type="Gene3D" id="3.90.660.10">
    <property type="match status" value="1"/>
</dbReference>
<feature type="chain" id="PRO_0000412596" description="L-amino-acid oxidase">
    <location>
        <begin position="1"/>
        <end position="30" status="greater than"/>
    </location>
</feature>
<feature type="disulfide bond" evidence="2">
    <location>
        <begin position="10"/>
        <end status="unknown"/>
    </location>
</feature>
<feature type="non-terminal residue" evidence="4">
    <location>
        <position position="30"/>
    </location>
</feature>
<evidence type="ECO:0000250" key="1">
    <source>
        <dbReference type="UniProtKB" id="P0CC17"/>
    </source>
</evidence>
<evidence type="ECO:0000250" key="2">
    <source>
        <dbReference type="UniProtKB" id="P81382"/>
    </source>
</evidence>
<evidence type="ECO:0000269" key="3">
    <source>
    </source>
</evidence>
<evidence type="ECO:0000303" key="4">
    <source>
    </source>
</evidence>
<evidence type="ECO:0000305" key="5"/>
<evidence type="ECO:0000305" key="6">
    <source>
    </source>
</evidence>
<name>OXLA_BOTLC</name>